<accession>C1DKK5</accession>
<feature type="chain" id="PRO_1000214470" description="DNA-directed RNA polymerase subunit beta">
    <location>
        <begin position="1"/>
        <end position="1358"/>
    </location>
</feature>
<comment type="function">
    <text evidence="1">DNA-dependent RNA polymerase catalyzes the transcription of DNA into RNA using the four ribonucleoside triphosphates as substrates.</text>
</comment>
<comment type="catalytic activity">
    <reaction evidence="1">
        <text>RNA(n) + a ribonucleoside 5'-triphosphate = RNA(n+1) + diphosphate</text>
        <dbReference type="Rhea" id="RHEA:21248"/>
        <dbReference type="Rhea" id="RHEA-COMP:14527"/>
        <dbReference type="Rhea" id="RHEA-COMP:17342"/>
        <dbReference type="ChEBI" id="CHEBI:33019"/>
        <dbReference type="ChEBI" id="CHEBI:61557"/>
        <dbReference type="ChEBI" id="CHEBI:140395"/>
        <dbReference type="EC" id="2.7.7.6"/>
    </reaction>
</comment>
<comment type="subunit">
    <text evidence="1">The RNAP catalytic core consists of 2 alpha, 1 beta, 1 beta' and 1 omega subunit. When a sigma factor is associated with the core the holoenzyme is formed, which can initiate transcription.</text>
</comment>
<comment type="similarity">
    <text evidence="1">Belongs to the RNA polymerase beta chain family.</text>
</comment>
<name>RPOB_AZOVD</name>
<keyword id="KW-0240">DNA-directed RNA polymerase</keyword>
<keyword id="KW-0548">Nucleotidyltransferase</keyword>
<keyword id="KW-0804">Transcription</keyword>
<keyword id="KW-0808">Transferase</keyword>
<evidence type="ECO:0000255" key="1">
    <source>
        <dbReference type="HAMAP-Rule" id="MF_01321"/>
    </source>
</evidence>
<proteinExistence type="inferred from homology"/>
<reference key="1">
    <citation type="journal article" date="2009" name="J. Bacteriol.">
        <title>Genome sequence of Azotobacter vinelandii, an obligate aerobe specialized to support diverse anaerobic metabolic processes.</title>
        <authorList>
            <person name="Setubal J.C."/>
            <person name="Dos Santos P."/>
            <person name="Goldman B.S."/>
            <person name="Ertesvaag H."/>
            <person name="Espin G."/>
            <person name="Rubio L.M."/>
            <person name="Valla S."/>
            <person name="Almeida N.F."/>
            <person name="Balasubramanian D."/>
            <person name="Cromes L."/>
            <person name="Curatti L."/>
            <person name="Du Z."/>
            <person name="Godsy E."/>
            <person name="Goodner B."/>
            <person name="Hellner-Burris K."/>
            <person name="Hernandez J.A."/>
            <person name="Houmiel K."/>
            <person name="Imperial J."/>
            <person name="Kennedy C."/>
            <person name="Larson T.J."/>
            <person name="Latreille P."/>
            <person name="Ligon L.S."/>
            <person name="Lu J."/>
            <person name="Maerk M."/>
            <person name="Miller N.M."/>
            <person name="Norton S."/>
            <person name="O'Carroll I.P."/>
            <person name="Paulsen I."/>
            <person name="Raulfs E.C."/>
            <person name="Roemer R."/>
            <person name="Rosser J."/>
            <person name="Segura D."/>
            <person name="Slater S."/>
            <person name="Stricklin S.L."/>
            <person name="Studholme D.J."/>
            <person name="Sun J."/>
            <person name="Viana C.J."/>
            <person name="Wallin E."/>
            <person name="Wang B."/>
            <person name="Wheeler C."/>
            <person name="Zhu H."/>
            <person name="Dean D.R."/>
            <person name="Dixon R."/>
            <person name="Wood D."/>
        </authorList>
    </citation>
    <scope>NUCLEOTIDE SEQUENCE [LARGE SCALE GENOMIC DNA]</scope>
    <source>
        <strain>DJ / ATCC BAA-1303</strain>
    </source>
</reference>
<dbReference type="EC" id="2.7.7.6" evidence="1"/>
<dbReference type="EMBL" id="CP001157">
    <property type="protein sequence ID" value="ACO76868.1"/>
    <property type="molecule type" value="Genomic_DNA"/>
</dbReference>
<dbReference type="RefSeq" id="WP_012699296.1">
    <property type="nucleotide sequence ID" value="NC_012560.1"/>
</dbReference>
<dbReference type="SMR" id="C1DKK5"/>
<dbReference type="STRING" id="322710.Avin_06170"/>
<dbReference type="EnsemblBacteria" id="ACO76868">
    <property type="protein sequence ID" value="ACO76868"/>
    <property type="gene ID" value="Avin_06170"/>
</dbReference>
<dbReference type="GeneID" id="88184029"/>
<dbReference type="KEGG" id="avn:Avin_06170"/>
<dbReference type="eggNOG" id="COG0085">
    <property type="taxonomic scope" value="Bacteria"/>
</dbReference>
<dbReference type="HOGENOM" id="CLU_000524_4_3_6"/>
<dbReference type="OrthoDB" id="9803954at2"/>
<dbReference type="Proteomes" id="UP000002424">
    <property type="component" value="Chromosome"/>
</dbReference>
<dbReference type="GO" id="GO:0000428">
    <property type="term" value="C:DNA-directed RNA polymerase complex"/>
    <property type="evidence" value="ECO:0007669"/>
    <property type="project" value="UniProtKB-KW"/>
</dbReference>
<dbReference type="GO" id="GO:0003677">
    <property type="term" value="F:DNA binding"/>
    <property type="evidence" value="ECO:0007669"/>
    <property type="project" value="UniProtKB-UniRule"/>
</dbReference>
<dbReference type="GO" id="GO:0003899">
    <property type="term" value="F:DNA-directed RNA polymerase activity"/>
    <property type="evidence" value="ECO:0007669"/>
    <property type="project" value="UniProtKB-UniRule"/>
</dbReference>
<dbReference type="GO" id="GO:0032549">
    <property type="term" value="F:ribonucleoside binding"/>
    <property type="evidence" value="ECO:0007669"/>
    <property type="project" value="InterPro"/>
</dbReference>
<dbReference type="GO" id="GO:0006351">
    <property type="term" value="P:DNA-templated transcription"/>
    <property type="evidence" value="ECO:0007669"/>
    <property type="project" value="UniProtKB-UniRule"/>
</dbReference>
<dbReference type="CDD" id="cd00653">
    <property type="entry name" value="RNA_pol_B_RPB2"/>
    <property type="match status" value="1"/>
</dbReference>
<dbReference type="FunFam" id="2.40.270.10:FF:000004">
    <property type="entry name" value="DNA-directed RNA polymerase subunit beta"/>
    <property type="match status" value="1"/>
</dbReference>
<dbReference type="FunFam" id="2.40.50.100:FF:000006">
    <property type="entry name" value="DNA-directed RNA polymerase subunit beta"/>
    <property type="match status" value="1"/>
</dbReference>
<dbReference type="FunFam" id="2.40.50.150:FF:000001">
    <property type="entry name" value="DNA-directed RNA polymerase subunit beta"/>
    <property type="match status" value="1"/>
</dbReference>
<dbReference type="FunFam" id="3.90.1110.10:FF:000001">
    <property type="entry name" value="DNA-directed RNA polymerase subunit beta"/>
    <property type="match status" value="1"/>
</dbReference>
<dbReference type="FunFam" id="3.90.1110.10:FF:000004">
    <property type="entry name" value="DNA-directed RNA polymerase subunit beta"/>
    <property type="match status" value="1"/>
</dbReference>
<dbReference type="FunFam" id="3.90.1800.10:FF:000001">
    <property type="entry name" value="DNA-directed RNA polymerase subunit beta"/>
    <property type="match status" value="1"/>
</dbReference>
<dbReference type="Gene3D" id="2.40.50.100">
    <property type="match status" value="1"/>
</dbReference>
<dbReference type="Gene3D" id="2.40.50.150">
    <property type="match status" value="1"/>
</dbReference>
<dbReference type="Gene3D" id="3.90.1100.10">
    <property type="match status" value="2"/>
</dbReference>
<dbReference type="Gene3D" id="2.30.150.10">
    <property type="entry name" value="DNA-directed RNA polymerase, beta subunit, external 1 domain"/>
    <property type="match status" value="1"/>
</dbReference>
<dbReference type="Gene3D" id="2.40.270.10">
    <property type="entry name" value="DNA-directed RNA polymerase, subunit 2, domain 6"/>
    <property type="match status" value="1"/>
</dbReference>
<dbReference type="Gene3D" id="3.90.1800.10">
    <property type="entry name" value="RNA polymerase alpha subunit dimerisation domain"/>
    <property type="match status" value="1"/>
</dbReference>
<dbReference type="Gene3D" id="3.90.1110.10">
    <property type="entry name" value="RNA polymerase Rpb2, domain 2"/>
    <property type="match status" value="1"/>
</dbReference>
<dbReference type="HAMAP" id="MF_01321">
    <property type="entry name" value="RNApol_bact_RpoB"/>
    <property type="match status" value="1"/>
</dbReference>
<dbReference type="InterPro" id="IPR042107">
    <property type="entry name" value="DNA-dir_RNA_pol_bsu_ext_1_sf"/>
</dbReference>
<dbReference type="InterPro" id="IPR019462">
    <property type="entry name" value="DNA-dir_RNA_pol_bsu_external_1"/>
</dbReference>
<dbReference type="InterPro" id="IPR015712">
    <property type="entry name" value="DNA-dir_RNA_pol_su2"/>
</dbReference>
<dbReference type="InterPro" id="IPR007120">
    <property type="entry name" value="DNA-dir_RNAP_su2_dom"/>
</dbReference>
<dbReference type="InterPro" id="IPR037033">
    <property type="entry name" value="DNA-dir_RNAP_su2_hyb_sf"/>
</dbReference>
<dbReference type="InterPro" id="IPR010243">
    <property type="entry name" value="RNA_pol_bsu_bac"/>
</dbReference>
<dbReference type="InterPro" id="IPR007121">
    <property type="entry name" value="RNA_pol_bsu_CS"/>
</dbReference>
<dbReference type="InterPro" id="IPR007644">
    <property type="entry name" value="RNA_pol_bsu_protrusion"/>
</dbReference>
<dbReference type="InterPro" id="IPR007642">
    <property type="entry name" value="RNA_pol_Rpb2_2"/>
</dbReference>
<dbReference type="InterPro" id="IPR037034">
    <property type="entry name" value="RNA_pol_Rpb2_2_sf"/>
</dbReference>
<dbReference type="InterPro" id="IPR007645">
    <property type="entry name" value="RNA_pol_Rpb2_3"/>
</dbReference>
<dbReference type="InterPro" id="IPR007641">
    <property type="entry name" value="RNA_pol_Rpb2_7"/>
</dbReference>
<dbReference type="InterPro" id="IPR014724">
    <property type="entry name" value="RNA_pol_RPB2_OB-fold"/>
</dbReference>
<dbReference type="NCBIfam" id="NF001616">
    <property type="entry name" value="PRK00405.1"/>
    <property type="match status" value="1"/>
</dbReference>
<dbReference type="NCBIfam" id="TIGR02013">
    <property type="entry name" value="rpoB"/>
    <property type="match status" value="1"/>
</dbReference>
<dbReference type="PANTHER" id="PTHR20856">
    <property type="entry name" value="DNA-DIRECTED RNA POLYMERASE I SUBUNIT 2"/>
    <property type="match status" value="1"/>
</dbReference>
<dbReference type="Pfam" id="PF04563">
    <property type="entry name" value="RNA_pol_Rpb2_1"/>
    <property type="match status" value="1"/>
</dbReference>
<dbReference type="Pfam" id="PF04561">
    <property type="entry name" value="RNA_pol_Rpb2_2"/>
    <property type="match status" value="2"/>
</dbReference>
<dbReference type="Pfam" id="PF04565">
    <property type="entry name" value="RNA_pol_Rpb2_3"/>
    <property type="match status" value="1"/>
</dbReference>
<dbReference type="Pfam" id="PF10385">
    <property type="entry name" value="RNA_pol_Rpb2_45"/>
    <property type="match status" value="1"/>
</dbReference>
<dbReference type="Pfam" id="PF00562">
    <property type="entry name" value="RNA_pol_Rpb2_6"/>
    <property type="match status" value="1"/>
</dbReference>
<dbReference type="Pfam" id="PF04560">
    <property type="entry name" value="RNA_pol_Rpb2_7"/>
    <property type="match status" value="1"/>
</dbReference>
<dbReference type="SUPFAM" id="SSF64484">
    <property type="entry name" value="beta and beta-prime subunits of DNA dependent RNA-polymerase"/>
    <property type="match status" value="1"/>
</dbReference>
<dbReference type="PROSITE" id="PS01166">
    <property type="entry name" value="RNA_POL_BETA"/>
    <property type="match status" value="1"/>
</dbReference>
<sequence>MAYSYTEKKRIRKDFSKLPDVMDVPYLLAIQLDSYREFLQAGVSKDKLRDVGLHAAFKSVFPIISYSGNAALEYVGYRLGEPAFDVKECVLRGVTFAVPLRVKVRLIIFDKESSNKAIKDIKEQEVYMGEIPLMTENGTFIVNGTERVIVSQLHRSPGVFFDHDRGKTHSSGKLLYSARIIPYRGSWLDFEFDPKDAVFVRIDRRRKLPASVLLRALGYSTEEVLDIFYDTNVFHVTEQGLSLELVPQRLRGEIAVFDIKDASGKVIVEQGRRITARHINQLEKAGIKELDVPLEYVLGRTSAKVIVHPSTGEIIAECNSELTQDLLVKIAKAQVVRIETLYTNDIDCGPFISDTLKIDSTTNQLEALVEIYRMMRPGEPPTKDAAETLFNNLFFSAERYDLSAVGRMKFNRRIGREEIEGAGVLSREDIVDVLKTLVDIRNGKGIVDDIDHLGNRRVRCVGEMAENQFRVGLVRVERAVKERLSMAESEGLMPQDLINAKPVAAAVKEFFGSSQLSQFMDQNNPLSEITHKRRVSALGPGGLTRERAGFEVRDVHPTHYGRVCPIETPEGPNIGLINSLAAYARTNQYGFLESPYRVVKEGQVTDEIVFLSAIEEADHVIAQASATLDENGRLIDELVAVRHLNEFTVKAPEDVTLMDVSPRQVVSVAASLIPFLEHDDANRALMGSNMQRQAVPTLRADKPLVGTGMERNVARDSGVCVVARRGGVIDSVDASRIVVRVNNDEVETGEAGVDIYNLTKYTRSNQNTCINQRPLVSKGDQVARGDIMADGPSTDMGELALGQNMRVAFMPWNGFNFEDSICLSERVVQEDRFTTIHIQELTCVARDTKLGPEEITADIPNVGEAALNKLDEAGIVYVGAEVMAGDILVGKVTPKGETQLTPEEKLLRAIFGEKASDVKDTSLRVPTGTKGTVIDVQVFTRDGVERDSRALAIERMQLDEIRKDLNEEFRIVEGATFERLRAALVGAVCEGGAGLKKGTEIDDGILDGLERGQWFKLRMADDALNEQLEKAQAYLADRRQLLDDKFEDKKRKLQQGDDLAPGVLKIVKVYLAIKRRIQPGDKMAGRHGNKGVVSVIMPVEDMPYDANGTPVDIVLNPLGVPSRMNVGQILETHLGLAAKGLGEKINRMLEEQRKVAELRQFLGEVYNEIGGRQKEDLDSLSDSEILDLASNLRGGVPMATPVFDGARETEIKAMLKLADLPESGQMRLFDGRTGNQFERPTTVGYMYMLKLNHLVDDKMHARSTGSYSLVTQQPLGGKAQFGGQRFGEMEVWALEAYGAAYTLQEMLTVKSDDVNGRTKMYKNIVDGDHRMEAGMPESFNVLIKEIRSLGIDIELETE</sequence>
<gene>
    <name evidence="1" type="primary">rpoB</name>
    <name type="ordered locus">Avin_06170</name>
</gene>
<organism>
    <name type="scientific">Azotobacter vinelandii (strain DJ / ATCC BAA-1303)</name>
    <dbReference type="NCBI Taxonomy" id="322710"/>
    <lineage>
        <taxon>Bacteria</taxon>
        <taxon>Pseudomonadati</taxon>
        <taxon>Pseudomonadota</taxon>
        <taxon>Gammaproteobacteria</taxon>
        <taxon>Pseudomonadales</taxon>
        <taxon>Pseudomonadaceae</taxon>
        <taxon>Azotobacter</taxon>
    </lineage>
</organism>
<protein>
    <recommendedName>
        <fullName evidence="1">DNA-directed RNA polymerase subunit beta</fullName>
        <shortName evidence="1">RNAP subunit beta</shortName>
        <ecNumber evidence="1">2.7.7.6</ecNumber>
    </recommendedName>
    <alternativeName>
        <fullName evidence="1">RNA polymerase subunit beta</fullName>
    </alternativeName>
    <alternativeName>
        <fullName evidence="1">Transcriptase subunit beta</fullName>
    </alternativeName>
</protein>